<organism>
    <name type="scientific">Frankia alni (strain DSM 45986 / CECT 9034 / ACN14a)</name>
    <dbReference type="NCBI Taxonomy" id="326424"/>
    <lineage>
        <taxon>Bacteria</taxon>
        <taxon>Bacillati</taxon>
        <taxon>Actinomycetota</taxon>
        <taxon>Actinomycetes</taxon>
        <taxon>Frankiales</taxon>
        <taxon>Frankiaceae</taxon>
        <taxon>Frankia</taxon>
    </lineage>
</organism>
<accession>Q0RDP2</accession>
<protein>
    <recommendedName>
        <fullName evidence="1">Small ribosomal subunit protein bS16</fullName>
    </recommendedName>
    <alternativeName>
        <fullName evidence="3">30S ribosomal protein S16</fullName>
    </alternativeName>
</protein>
<reference key="1">
    <citation type="journal article" date="2007" name="Genome Res.">
        <title>Genome characteristics of facultatively symbiotic Frankia sp. strains reflect host range and host plant biogeography.</title>
        <authorList>
            <person name="Normand P."/>
            <person name="Lapierre P."/>
            <person name="Tisa L.S."/>
            <person name="Gogarten J.P."/>
            <person name="Alloisio N."/>
            <person name="Bagnarol E."/>
            <person name="Bassi C.A."/>
            <person name="Berry A.M."/>
            <person name="Bickhart D.M."/>
            <person name="Choisne N."/>
            <person name="Couloux A."/>
            <person name="Cournoyer B."/>
            <person name="Cruveiller S."/>
            <person name="Daubin V."/>
            <person name="Demange N."/>
            <person name="Francino M.P."/>
            <person name="Goltsman E."/>
            <person name="Huang Y."/>
            <person name="Kopp O.R."/>
            <person name="Labarre L."/>
            <person name="Lapidus A."/>
            <person name="Lavire C."/>
            <person name="Marechal J."/>
            <person name="Martinez M."/>
            <person name="Mastronunzio J.E."/>
            <person name="Mullin B.C."/>
            <person name="Niemann J."/>
            <person name="Pujic P."/>
            <person name="Rawnsley T."/>
            <person name="Rouy Z."/>
            <person name="Schenowitz C."/>
            <person name="Sellstedt A."/>
            <person name="Tavares F."/>
            <person name="Tomkins J.P."/>
            <person name="Vallenet D."/>
            <person name="Valverde C."/>
            <person name="Wall L.G."/>
            <person name="Wang Y."/>
            <person name="Medigue C."/>
            <person name="Benson D.R."/>
        </authorList>
    </citation>
    <scope>NUCLEOTIDE SEQUENCE [LARGE SCALE GENOMIC DNA]</scope>
    <source>
        <strain>DSM 45986 / CECT 9034 / ACN14a</strain>
    </source>
</reference>
<name>RS16_FRAAA</name>
<comment type="similarity">
    <text evidence="1">Belongs to the bacterial ribosomal protein bS16 family.</text>
</comment>
<evidence type="ECO:0000255" key="1">
    <source>
        <dbReference type="HAMAP-Rule" id="MF_00385"/>
    </source>
</evidence>
<evidence type="ECO:0000256" key="2">
    <source>
        <dbReference type="SAM" id="MobiDB-lite"/>
    </source>
</evidence>
<evidence type="ECO:0000305" key="3"/>
<proteinExistence type="inferred from homology"/>
<dbReference type="EMBL" id="CT573213">
    <property type="protein sequence ID" value="CAJ64424.1"/>
    <property type="molecule type" value="Genomic_DNA"/>
</dbReference>
<dbReference type="RefSeq" id="WP_011606864.1">
    <property type="nucleotide sequence ID" value="NC_008278.1"/>
</dbReference>
<dbReference type="SMR" id="Q0RDP2"/>
<dbReference type="STRING" id="326424.FRAAL5792"/>
<dbReference type="KEGG" id="fal:FRAAL5792"/>
<dbReference type="eggNOG" id="COG0228">
    <property type="taxonomic scope" value="Bacteria"/>
</dbReference>
<dbReference type="HOGENOM" id="CLU_100590_1_1_11"/>
<dbReference type="OrthoDB" id="9807878at2"/>
<dbReference type="Proteomes" id="UP000000657">
    <property type="component" value="Chromosome"/>
</dbReference>
<dbReference type="GO" id="GO:0005737">
    <property type="term" value="C:cytoplasm"/>
    <property type="evidence" value="ECO:0007669"/>
    <property type="project" value="UniProtKB-ARBA"/>
</dbReference>
<dbReference type="GO" id="GO:0015935">
    <property type="term" value="C:small ribosomal subunit"/>
    <property type="evidence" value="ECO:0007669"/>
    <property type="project" value="TreeGrafter"/>
</dbReference>
<dbReference type="GO" id="GO:0003735">
    <property type="term" value="F:structural constituent of ribosome"/>
    <property type="evidence" value="ECO:0007669"/>
    <property type="project" value="InterPro"/>
</dbReference>
<dbReference type="GO" id="GO:0006412">
    <property type="term" value="P:translation"/>
    <property type="evidence" value="ECO:0007669"/>
    <property type="project" value="UniProtKB-UniRule"/>
</dbReference>
<dbReference type="Gene3D" id="3.30.1320.10">
    <property type="match status" value="1"/>
</dbReference>
<dbReference type="HAMAP" id="MF_00385">
    <property type="entry name" value="Ribosomal_bS16"/>
    <property type="match status" value="1"/>
</dbReference>
<dbReference type="InterPro" id="IPR000307">
    <property type="entry name" value="Ribosomal_bS16"/>
</dbReference>
<dbReference type="InterPro" id="IPR023803">
    <property type="entry name" value="Ribosomal_bS16_dom_sf"/>
</dbReference>
<dbReference type="NCBIfam" id="NF011093">
    <property type="entry name" value="PRK14520.1"/>
    <property type="match status" value="1"/>
</dbReference>
<dbReference type="NCBIfam" id="TIGR00002">
    <property type="entry name" value="S16"/>
    <property type="match status" value="1"/>
</dbReference>
<dbReference type="PANTHER" id="PTHR12919">
    <property type="entry name" value="30S RIBOSOMAL PROTEIN S16"/>
    <property type="match status" value="1"/>
</dbReference>
<dbReference type="PANTHER" id="PTHR12919:SF20">
    <property type="entry name" value="SMALL RIBOSOMAL SUBUNIT PROTEIN BS16M"/>
    <property type="match status" value="1"/>
</dbReference>
<dbReference type="Pfam" id="PF00886">
    <property type="entry name" value="Ribosomal_S16"/>
    <property type="match status" value="1"/>
</dbReference>
<dbReference type="SUPFAM" id="SSF54565">
    <property type="entry name" value="Ribosomal protein S16"/>
    <property type="match status" value="1"/>
</dbReference>
<feature type="chain" id="PRO_1000049256" description="Small ribosomal subunit protein bS16">
    <location>
        <begin position="1"/>
        <end position="148"/>
    </location>
</feature>
<feature type="region of interest" description="Disordered" evidence="2">
    <location>
        <begin position="107"/>
        <end position="148"/>
    </location>
</feature>
<feature type="compositionally biased region" description="Low complexity" evidence="2">
    <location>
        <begin position="129"/>
        <end position="148"/>
    </location>
</feature>
<gene>
    <name evidence="1" type="primary">rpsP</name>
    <name type="ordered locus">FRAAL5792</name>
</gene>
<sequence length="148" mass="15876">MATKIKLQRLGKMREPHYRIVVADARTKRDGRVIEAIGQYHPKSDPSIIKVDAERAQHWLSVGAQPTEPVLAILKVTGDWQKFKNLPAPPPMKVAEPKADKREIFQAAARAAAGAEDRPATTPKKAKKAASADGADAPAADAPTAAGQ</sequence>
<keyword id="KW-1185">Reference proteome</keyword>
<keyword id="KW-0687">Ribonucleoprotein</keyword>
<keyword id="KW-0689">Ribosomal protein</keyword>